<comment type="tissue specificity">
    <text>Mainly expressed in placenta.</text>
</comment>
<protein>
    <recommendedName>
        <fullName>Down syndrome critical region protein 4</fullName>
    </recommendedName>
    <alternativeName>
        <fullName>Down syndrome critical region protein B</fullName>
    </alternativeName>
</protein>
<proteinExistence type="evidence at transcript level"/>
<reference key="1">
    <citation type="journal article" date="1997" name="DNA Res.">
        <title>A novel gene isolated from human placenta located in Down syndrome critical region on chromosome 21.</title>
        <authorList>
            <person name="Nakamura A."/>
            <person name="Hattori M."/>
            <person name="Sakaki Y."/>
        </authorList>
    </citation>
    <scope>NUCLEOTIDE SEQUENCE [MRNA]</scope>
    <source>
        <tissue>Placenta</tissue>
    </source>
</reference>
<reference key="2">
    <citation type="journal article" date="2004" name="Genome Res.">
        <title>The status, quality, and expansion of the NIH full-length cDNA project: the Mammalian Gene Collection (MGC).</title>
        <authorList>
            <consortium name="The MGC Project Team"/>
        </authorList>
    </citation>
    <scope>NUCLEOTIDE SEQUENCE [LARGE SCALE MRNA]</scope>
</reference>
<name>DSCR4_HUMAN</name>
<accession>P56555</accession>
<accession>Q4VB31</accession>
<sequence>MSLIILTRDDEPRIFTPDSDAASPALHSTSPLPDPASASPLHREEKILPKVCNIVSCLSFSLPASPTDSGLASPTIITREGQQFWAKCLIWKYQLYLHGLHKKSDGRRDKQISASPST</sequence>
<keyword id="KW-1185">Reference proteome</keyword>
<feature type="chain" id="PRO_0000080019" description="Down syndrome critical region protein 4">
    <location>
        <begin position="1"/>
        <end position="118"/>
    </location>
</feature>
<feature type="region of interest" description="Disordered" evidence="1">
    <location>
        <begin position="1"/>
        <end position="39"/>
    </location>
</feature>
<feature type="compositionally biased region" description="Low complexity" evidence="1">
    <location>
        <begin position="28"/>
        <end position="39"/>
    </location>
</feature>
<gene>
    <name type="primary">DSCR4</name>
    <name type="synonym">DCRB</name>
    <name type="synonym">DSCRB</name>
</gene>
<organism>
    <name type="scientific">Homo sapiens</name>
    <name type="common">Human</name>
    <dbReference type="NCBI Taxonomy" id="9606"/>
    <lineage>
        <taxon>Eukaryota</taxon>
        <taxon>Metazoa</taxon>
        <taxon>Chordata</taxon>
        <taxon>Craniata</taxon>
        <taxon>Vertebrata</taxon>
        <taxon>Euteleostomi</taxon>
        <taxon>Mammalia</taxon>
        <taxon>Eutheria</taxon>
        <taxon>Euarchontoglires</taxon>
        <taxon>Primates</taxon>
        <taxon>Haplorrhini</taxon>
        <taxon>Catarrhini</taxon>
        <taxon>Hominidae</taxon>
        <taxon>Homo</taxon>
    </lineage>
</organism>
<evidence type="ECO:0000256" key="1">
    <source>
        <dbReference type="SAM" id="MobiDB-lite"/>
    </source>
</evidence>
<dbReference type="EMBL" id="AB000099">
    <property type="protein sequence ID" value="BAA25877.1"/>
    <property type="molecule type" value="mRNA"/>
</dbReference>
<dbReference type="EMBL" id="BC069729">
    <property type="protein sequence ID" value="AAH69729.1"/>
    <property type="molecule type" value="mRNA"/>
</dbReference>
<dbReference type="EMBL" id="BC096162">
    <property type="protein sequence ID" value="AAH96162.1"/>
    <property type="molecule type" value="mRNA"/>
</dbReference>
<dbReference type="EMBL" id="BC096163">
    <property type="protein sequence ID" value="AAH96163.1"/>
    <property type="molecule type" value="mRNA"/>
</dbReference>
<dbReference type="EMBL" id="BC096164">
    <property type="protein sequence ID" value="AAH96164.1"/>
    <property type="molecule type" value="mRNA"/>
</dbReference>
<dbReference type="RefSeq" id="NP_005858.1">
    <property type="nucleotide sequence ID" value="NM_005867.3"/>
</dbReference>
<dbReference type="BioGRID" id="115570">
    <property type="interactions" value="11"/>
</dbReference>
<dbReference type="FunCoup" id="P56555">
    <property type="interactions" value="3"/>
</dbReference>
<dbReference type="IntAct" id="P56555">
    <property type="interactions" value="11"/>
</dbReference>
<dbReference type="iPTMnet" id="P56555"/>
<dbReference type="PhosphoSitePlus" id="P56555"/>
<dbReference type="BioMuta" id="DSCR4"/>
<dbReference type="PaxDb" id="9606-ENSP00000328676"/>
<dbReference type="ProteomicsDB" id="56925"/>
<dbReference type="DNASU" id="10281"/>
<dbReference type="UCSC" id="uc002ywp.3">
    <property type="organism name" value="human"/>
</dbReference>
<dbReference type="AGR" id="HGNC:3045"/>
<dbReference type="GeneCards" id="DSCR4"/>
<dbReference type="HGNC" id="HGNC:3045">
    <property type="gene designation" value="DSCR4"/>
</dbReference>
<dbReference type="MIM" id="604829">
    <property type="type" value="gene"/>
</dbReference>
<dbReference type="neXtProt" id="NX_P56555"/>
<dbReference type="PharmGKB" id="PA27497"/>
<dbReference type="eggNOG" id="ENOG502TEH5">
    <property type="taxonomic scope" value="Eukaryota"/>
</dbReference>
<dbReference type="HOGENOM" id="CLU_2084115_0_0_1"/>
<dbReference type="InParanoid" id="P56555"/>
<dbReference type="PAN-GO" id="P56555">
    <property type="GO annotations" value="0 GO annotations based on evolutionary models"/>
</dbReference>
<dbReference type="PathwayCommons" id="P56555"/>
<dbReference type="SignaLink" id="P56555"/>
<dbReference type="BioGRID-ORCS" id="10281">
    <property type="hits" value="369 hits in 1146 CRISPR screens"/>
</dbReference>
<dbReference type="ChiTaRS" id="DSCR4">
    <property type="organism name" value="human"/>
</dbReference>
<dbReference type="GenomeRNAi" id="10281"/>
<dbReference type="Pharos" id="P56555">
    <property type="development level" value="Tdark"/>
</dbReference>
<dbReference type="PRO" id="PR:P56555"/>
<dbReference type="Proteomes" id="UP000005640">
    <property type="component" value="Unplaced"/>
</dbReference>
<dbReference type="RNAct" id="P56555">
    <property type="molecule type" value="protein"/>
</dbReference>